<comment type="similarity">
    <text evidence="1">Belongs to the UPF0346 family.</text>
</comment>
<gene>
    <name type="ordered locus">LJ_1103</name>
</gene>
<sequence>MAYRESFYRFLMTQRNPDSLDDIAEFANNAQHDSSFPKQEEDYEKLSEYLELNAGYLPSMSVFDKAYQLYLDNMN</sequence>
<proteinExistence type="inferred from homology"/>
<dbReference type="EMBL" id="AE017198">
    <property type="protein sequence ID" value="AAS08925.1"/>
    <property type="molecule type" value="Genomic_DNA"/>
</dbReference>
<dbReference type="RefSeq" id="WP_004894551.1">
    <property type="nucleotide sequence ID" value="NC_005362.1"/>
</dbReference>
<dbReference type="SMR" id="Q74JK4"/>
<dbReference type="KEGG" id="ljo:LJ_1103"/>
<dbReference type="eggNOG" id="COG4479">
    <property type="taxonomic scope" value="Bacteria"/>
</dbReference>
<dbReference type="HOGENOM" id="CLU_177534_1_0_9"/>
<dbReference type="Proteomes" id="UP000000581">
    <property type="component" value="Chromosome"/>
</dbReference>
<dbReference type="Gene3D" id="1.10.150.260">
    <property type="entry name" value="YozE SAM-like"/>
    <property type="match status" value="1"/>
</dbReference>
<dbReference type="HAMAP" id="MF_01538">
    <property type="entry name" value="UPF0346"/>
    <property type="match status" value="1"/>
</dbReference>
<dbReference type="InterPro" id="IPR010673">
    <property type="entry name" value="UPF0346"/>
</dbReference>
<dbReference type="InterPro" id="IPR023089">
    <property type="entry name" value="YozE_SAM-like"/>
</dbReference>
<dbReference type="InterPro" id="IPR036806">
    <property type="entry name" value="YozE_SAM-like_sf"/>
</dbReference>
<dbReference type="NCBIfam" id="NF010193">
    <property type="entry name" value="PRK13672.1"/>
    <property type="match status" value="1"/>
</dbReference>
<dbReference type="Pfam" id="PF06855">
    <property type="entry name" value="YozE_SAM_like"/>
    <property type="match status" value="1"/>
</dbReference>
<dbReference type="PIRSF" id="PIRSF037262">
    <property type="entry name" value="UCP037262"/>
    <property type="match status" value="1"/>
</dbReference>
<dbReference type="SUPFAM" id="SSF140652">
    <property type="entry name" value="YozE-like"/>
    <property type="match status" value="1"/>
</dbReference>
<accession>Q74JK4</accession>
<protein>
    <recommendedName>
        <fullName evidence="1">UPF0346 protein LJ_1103</fullName>
    </recommendedName>
</protein>
<evidence type="ECO:0000255" key="1">
    <source>
        <dbReference type="HAMAP-Rule" id="MF_01538"/>
    </source>
</evidence>
<organism>
    <name type="scientific">Lactobacillus johnsonii (strain CNCM I-12250 / La1 / NCC 533)</name>
    <dbReference type="NCBI Taxonomy" id="257314"/>
    <lineage>
        <taxon>Bacteria</taxon>
        <taxon>Bacillati</taxon>
        <taxon>Bacillota</taxon>
        <taxon>Bacilli</taxon>
        <taxon>Lactobacillales</taxon>
        <taxon>Lactobacillaceae</taxon>
        <taxon>Lactobacillus</taxon>
    </lineage>
</organism>
<feature type="chain" id="PRO_0000164274" description="UPF0346 protein LJ_1103">
    <location>
        <begin position="1"/>
        <end position="75"/>
    </location>
</feature>
<name>Y1103_LACJO</name>
<reference key="1">
    <citation type="journal article" date="2004" name="Proc. Natl. Acad. Sci. U.S.A.">
        <title>The genome sequence of the probiotic intestinal bacterium Lactobacillus johnsonii NCC 533.</title>
        <authorList>
            <person name="Pridmore R.D."/>
            <person name="Berger B."/>
            <person name="Desiere F."/>
            <person name="Vilanova D."/>
            <person name="Barretto C."/>
            <person name="Pittet A.-C."/>
            <person name="Zwahlen M.-C."/>
            <person name="Rouvet M."/>
            <person name="Altermann E."/>
            <person name="Barrangou R."/>
            <person name="Mollet B."/>
            <person name="Mercenier A."/>
            <person name="Klaenhammer T."/>
            <person name="Arigoni F."/>
            <person name="Schell M.A."/>
        </authorList>
    </citation>
    <scope>NUCLEOTIDE SEQUENCE [LARGE SCALE GENOMIC DNA]</scope>
    <source>
        <strain>CNCM I-1225 / La1 / NCC 533</strain>
    </source>
</reference>